<evidence type="ECO:0000255" key="1">
    <source>
        <dbReference type="HAMAP-Rule" id="MF_00020"/>
    </source>
</evidence>
<proteinExistence type="inferred from homology"/>
<keyword id="KW-0067">ATP-binding</keyword>
<keyword id="KW-0963">Cytoplasm</keyword>
<keyword id="KW-0418">Kinase</keyword>
<keyword id="KW-0460">Magnesium</keyword>
<keyword id="KW-0479">Metal-binding</keyword>
<keyword id="KW-0547">Nucleotide-binding</keyword>
<keyword id="KW-0808">Transferase</keyword>
<protein>
    <recommendedName>
        <fullName evidence="1">Acetate kinase</fullName>
        <ecNumber evidence="1">2.7.2.1</ecNumber>
    </recommendedName>
    <alternativeName>
        <fullName evidence="1">Acetokinase</fullName>
    </alternativeName>
</protein>
<comment type="function">
    <text evidence="1">Catalyzes the formation of acetyl phosphate from acetate and ATP. Can also catalyze the reverse reaction.</text>
</comment>
<comment type="catalytic activity">
    <reaction evidence="1">
        <text>acetate + ATP = acetyl phosphate + ADP</text>
        <dbReference type="Rhea" id="RHEA:11352"/>
        <dbReference type="ChEBI" id="CHEBI:22191"/>
        <dbReference type="ChEBI" id="CHEBI:30089"/>
        <dbReference type="ChEBI" id="CHEBI:30616"/>
        <dbReference type="ChEBI" id="CHEBI:456216"/>
        <dbReference type="EC" id="2.7.2.1"/>
    </reaction>
</comment>
<comment type="cofactor">
    <cofactor evidence="1">
        <name>Mg(2+)</name>
        <dbReference type="ChEBI" id="CHEBI:18420"/>
    </cofactor>
    <cofactor evidence="1">
        <name>Mn(2+)</name>
        <dbReference type="ChEBI" id="CHEBI:29035"/>
    </cofactor>
    <text evidence="1">Mg(2+). Can also accept Mn(2+).</text>
</comment>
<comment type="pathway">
    <text evidence="1">Metabolic intermediate biosynthesis; acetyl-CoA biosynthesis; acetyl-CoA from acetate: step 1/2.</text>
</comment>
<comment type="subunit">
    <text evidence="1">Homodimer.</text>
</comment>
<comment type="subcellular location">
    <subcellularLocation>
        <location evidence="1">Cytoplasm</location>
    </subcellularLocation>
</comment>
<comment type="similarity">
    <text evidence="1">Belongs to the acetokinase family.</text>
</comment>
<gene>
    <name evidence="1" type="primary">ackA</name>
    <name type="ordered locus">SPT_2039</name>
</gene>
<organism>
    <name type="scientific">Streptococcus pneumoniae (strain Taiwan19F-14)</name>
    <dbReference type="NCBI Taxonomy" id="487213"/>
    <lineage>
        <taxon>Bacteria</taxon>
        <taxon>Bacillati</taxon>
        <taxon>Bacillota</taxon>
        <taxon>Bacilli</taxon>
        <taxon>Lactobacillales</taxon>
        <taxon>Streptococcaceae</taxon>
        <taxon>Streptococcus</taxon>
    </lineage>
</organism>
<dbReference type="EC" id="2.7.2.1" evidence="1"/>
<dbReference type="EMBL" id="CP000921">
    <property type="protein sequence ID" value="ACO23870.1"/>
    <property type="molecule type" value="Genomic_DNA"/>
</dbReference>
<dbReference type="RefSeq" id="WP_000167766.1">
    <property type="nucleotide sequence ID" value="NC_012469.1"/>
</dbReference>
<dbReference type="SMR" id="C1CTV0"/>
<dbReference type="KEGG" id="snt:SPT_2039"/>
<dbReference type="HOGENOM" id="CLU_020352_0_1_9"/>
<dbReference type="UniPathway" id="UPA00340">
    <property type="reaction ID" value="UER00458"/>
</dbReference>
<dbReference type="GO" id="GO:0005737">
    <property type="term" value="C:cytoplasm"/>
    <property type="evidence" value="ECO:0007669"/>
    <property type="project" value="UniProtKB-SubCell"/>
</dbReference>
<dbReference type="GO" id="GO:0008776">
    <property type="term" value="F:acetate kinase activity"/>
    <property type="evidence" value="ECO:0007669"/>
    <property type="project" value="UniProtKB-UniRule"/>
</dbReference>
<dbReference type="GO" id="GO:0005524">
    <property type="term" value="F:ATP binding"/>
    <property type="evidence" value="ECO:0007669"/>
    <property type="project" value="UniProtKB-KW"/>
</dbReference>
<dbReference type="GO" id="GO:0000287">
    <property type="term" value="F:magnesium ion binding"/>
    <property type="evidence" value="ECO:0007669"/>
    <property type="project" value="UniProtKB-UniRule"/>
</dbReference>
<dbReference type="GO" id="GO:0006083">
    <property type="term" value="P:acetate metabolic process"/>
    <property type="evidence" value="ECO:0007669"/>
    <property type="project" value="TreeGrafter"/>
</dbReference>
<dbReference type="GO" id="GO:0006085">
    <property type="term" value="P:acetyl-CoA biosynthetic process"/>
    <property type="evidence" value="ECO:0007669"/>
    <property type="project" value="UniProtKB-UniRule"/>
</dbReference>
<dbReference type="CDD" id="cd24010">
    <property type="entry name" value="ASKHA_NBD_AcK_PK"/>
    <property type="match status" value="1"/>
</dbReference>
<dbReference type="Gene3D" id="3.30.420.40">
    <property type="match status" value="2"/>
</dbReference>
<dbReference type="HAMAP" id="MF_00020">
    <property type="entry name" value="Acetate_kinase"/>
    <property type="match status" value="1"/>
</dbReference>
<dbReference type="InterPro" id="IPR004372">
    <property type="entry name" value="Ac/propionate_kinase"/>
</dbReference>
<dbReference type="InterPro" id="IPR000890">
    <property type="entry name" value="Aliphatic_acid_kin_short-chain"/>
</dbReference>
<dbReference type="InterPro" id="IPR023865">
    <property type="entry name" value="Aliphatic_acid_kinase_CS"/>
</dbReference>
<dbReference type="InterPro" id="IPR043129">
    <property type="entry name" value="ATPase_NBD"/>
</dbReference>
<dbReference type="NCBIfam" id="TIGR00016">
    <property type="entry name" value="ackA"/>
    <property type="match status" value="1"/>
</dbReference>
<dbReference type="PANTHER" id="PTHR21060">
    <property type="entry name" value="ACETATE KINASE"/>
    <property type="match status" value="1"/>
</dbReference>
<dbReference type="PANTHER" id="PTHR21060:SF15">
    <property type="entry name" value="ACETATE KINASE-RELATED"/>
    <property type="match status" value="1"/>
</dbReference>
<dbReference type="Pfam" id="PF00871">
    <property type="entry name" value="Acetate_kinase"/>
    <property type="match status" value="1"/>
</dbReference>
<dbReference type="PIRSF" id="PIRSF000722">
    <property type="entry name" value="Acetate_prop_kin"/>
    <property type="match status" value="1"/>
</dbReference>
<dbReference type="PRINTS" id="PR00471">
    <property type="entry name" value="ACETATEKNASE"/>
</dbReference>
<dbReference type="SUPFAM" id="SSF53067">
    <property type="entry name" value="Actin-like ATPase domain"/>
    <property type="match status" value="2"/>
</dbReference>
<dbReference type="PROSITE" id="PS01075">
    <property type="entry name" value="ACETATE_KINASE_1"/>
    <property type="match status" value="1"/>
</dbReference>
<dbReference type="PROSITE" id="PS01076">
    <property type="entry name" value="ACETATE_KINASE_2"/>
    <property type="match status" value="1"/>
</dbReference>
<sequence length="396" mass="43330">MTKTIAINAGSSSLKWQLYLMPEEKVLAKGLIERIGLKDSISTVKFDGRSEQQILDIENHTQAVKILLDDLIRFDIIKAYDEITGVGHRVVAGGEYFKESTVVEGDVLEKVEELSLLAPLHNPANAAGVRAFKELLPDITSVVVFDTSFHTSMPEKAYRYPLPTKYYTENKVRKYGAHGTSHQFVAGEAAKLLGRPLEDLKLITCHIGNGGSITAVKAGKSVDTSMGFTPLGGIMMGTRTGDIDPAIIPYLMQYTEDFNTPEDISRVLNRESGLLGVSANSSDMRDIEAAVAEGNHEASLAYEMYVDRIQKHIGQYLAVLNGADAIVFTAGVGENAESFRRDVISGISWFGCDVDDEKNVFGVTGDISTEAAKIRVLVIPTDEELVIARDVERLKK</sequence>
<reference key="1">
    <citation type="journal article" date="2010" name="Genome Biol.">
        <title>Structure and dynamics of the pan-genome of Streptococcus pneumoniae and closely related species.</title>
        <authorList>
            <person name="Donati C."/>
            <person name="Hiller N.L."/>
            <person name="Tettelin H."/>
            <person name="Muzzi A."/>
            <person name="Croucher N.J."/>
            <person name="Angiuoli S.V."/>
            <person name="Oggioni M."/>
            <person name="Dunning Hotopp J.C."/>
            <person name="Hu F.Z."/>
            <person name="Riley D.R."/>
            <person name="Covacci A."/>
            <person name="Mitchell T.J."/>
            <person name="Bentley S.D."/>
            <person name="Kilian M."/>
            <person name="Ehrlich G.D."/>
            <person name="Rappuoli R."/>
            <person name="Moxon E.R."/>
            <person name="Masignani V."/>
        </authorList>
    </citation>
    <scope>NUCLEOTIDE SEQUENCE [LARGE SCALE GENOMIC DNA]</scope>
    <source>
        <strain>Taiwan19F-14</strain>
    </source>
</reference>
<name>ACKA_STRZT</name>
<accession>C1CTV0</accession>
<feature type="chain" id="PRO_1000116815" description="Acetate kinase">
    <location>
        <begin position="1"/>
        <end position="396"/>
    </location>
</feature>
<feature type="active site" description="Proton donor/acceptor" evidence="1">
    <location>
        <position position="146"/>
    </location>
</feature>
<feature type="binding site" evidence="1">
    <location>
        <position position="8"/>
    </location>
    <ligand>
        <name>Mg(2+)</name>
        <dbReference type="ChEBI" id="CHEBI:18420"/>
    </ligand>
</feature>
<feature type="binding site" evidence="1">
    <location>
        <position position="15"/>
    </location>
    <ligand>
        <name>ATP</name>
        <dbReference type="ChEBI" id="CHEBI:30616"/>
    </ligand>
</feature>
<feature type="binding site" evidence="1">
    <location>
        <position position="89"/>
    </location>
    <ligand>
        <name>substrate</name>
    </ligand>
</feature>
<feature type="binding site" evidence="1">
    <location>
        <begin position="206"/>
        <end position="210"/>
    </location>
    <ligand>
        <name>ATP</name>
        <dbReference type="ChEBI" id="CHEBI:30616"/>
    </ligand>
</feature>
<feature type="binding site" evidence="1">
    <location>
        <begin position="283"/>
        <end position="285"/>
    </location>
    <ligand>
        <name>ATP</name>
        <dbReference type="ChEBI" id="CHEBI:30616"/>
    </ligand>
</feature>
<feature type="binding site" evidence="1">
    <location>
        <begin position="331"/>
        <end position="335"/>
    </location>
    <ligand>
        <name>ATP</name>
        <dbReference type="ChEBI" id="CHEBI:30616"/>
    </ligand>
</feature>
<feature type="binding site" evidence="1">
    <location>
        <position position="383"/>
    </location>
    <ligand>
        <name>Mg(2+)</name>
        <dbReference type="ChEBI" id="CHEBI:18420"/>
    </ligand>
</feature>
<feature type="site" description="Transition state stabilizer" evidence="1">
    <location>
        <position position="178"/>
    </location>
</feature>
<feature type="site" description="Transition state stabilizer" evidence="1">
    <location>
        <position position="239"/>
    </location>
</feature>